<accession>Q3K0Y1</accession>
<reference key="1">
    <citation type="journal article" date="2005" name="Proc. Natl. Acad. Sci. U.S.A.">
        <title>Genome analysis of multiple pathogenic isolates of Streptococcus agalactiae: implications for the microbial 'pan-genome'.</title>
        <authorList>
            <person name="Tettelin H."/>
            <person name="Masignani V."/>
            <person name="Cieslewicz M.J."/>
            <person name="Donati C."/>
            <person name="Medini D."/>
            <person name="Ward N.L."/>
            <person name="Angiuoli S.V."/>
            <person name="Crabtree J."/>
            <person name="Jones A.L."/>
            <person name="Durkin A.S."/>
            <person name="DeBoy R.T."/>
            <person name="Davidsen T.M."/>
            <person name="Mora M."/>
            <person name="Scarselli M."/>
            <person name="Margarit y Ros I."/>
            <person name="Peterson J.D."/>
            <person name="Hauser C.R."/>
            <person name="Sundaram J.P."/>
            <person name="Nelson W.C."/>
            <person name="Madupu R."/>
            <person name="Brinkac L.M."/>
            <person name="Dodson R.J."/>
            <person name="Rosovitz M.J."/>
            <person name="Sullivan S.A."/>
            <person name="Daugherty S.C."/>
            <person name="Haft D.H."/>
            <person name="Selengut J."/>
            <person name="Gwinn M.L."/>
            <person name="Zhou L."/>
            <person name="Zafar N."/>
            <person name="Khouri H."/>
            <person name="Radune D."/>
            <person name="Dimitrov G."/>
            <person name="Watkins K."/>
            <person name="O'Connor K.J."/>
            <person name="Smith S."/>
            <person name="Utterback T.R."/>
            <person name="White O."/>
            <person name="Rubens C.E."/>
            <person name="Grandi G."/>
            <person name="Madoff L.C."/>
            <person name="Kasper D.L."/>
            <person name="Telford J.L."/>
            <person name="Wessels M.R."/>
            <person name="Rappuoli R."/>
            <person name="Fraser C.M."/>
        </authorList>
    </citation>
    <scope>NUCLEOTIDE SEQUENCE [LARGE SCALE GENOMIC DNA]</scope>
    <source>
        <strain>ATCC 27591 / A909 / CDC SS700</strain>
    </source>
</reference>
<comment type="catalytic activity">
    <reaction evidence="2">
        <text>GTP + H2O = 7,8-dihydroneopterin 3'-triphosphate + formate + H(+)</text>
        <dbReference type="Rhea" id="RHEA:17473"/>
        <dbReference type="ChEBI" id="CHEBI:15377"/>
        <dbReference type="ChEBI" id="CHEBI:15378"/>
        <dbReference type="ChEBI" id="CHEBI:15740"/>
        <dbReference type="ChEBI" id="CHEBI:37565"/>
        <dbReference type="ChEBI" id="CHEBI:58462"/>
        <dbReference type="EC" id="3.5.4.16"/>
    </reaction>
</comment>
<comment type="pathway">
    <text evidence="2">Cofactor biosynthesis; 7,8-dihydroneopterin triphosphate biosynthesis; 7,8-dihydroneopterin triphosphate from GTP: step 1/1.</text>
</comment>
<comment type="subunit">
    <text evidence="1">Toroid-shaped homodecamer, composed of two pentamers of five dimers.</text>
</comment>
<comment type="similarity">
    <text evidence="2">Belongs to the GTP cyclohydrolase I family.</text>
</comment>
<organism>
    <name type="scientific">Streptococcus agalactiae serotype Ia (strain ATCC 27591 / A909 / CDC SS700)</name>
    <dbReference type="NCBI Taxonomy" id="205921"/>
    <lineage>
        <taxon>Bacteria</taxon>
        <taxon>Bacillati</taxon>
        <taxon>Bacillota</taxon>
        <taxon>Bacilli</taxon>
        <taxon>Lactobacillales</taxon>
        <taxon>Streptococcaceae</taxon>
        <taxon>Streptococcus</taxon>
    </lineage>
</organism>
<evidence type="ECO:0000250" key="1"/>
<evidence type="ECO:0000255" key="2">
    <source>
        <dbReference type="HAMAP-Rule" id="MF_00223"/>
    </source>
</evidence>
<feature type="chain" id="PRO_1000043744" description="GTP cyclohydrolase 1">
    <location>
        <begin position="1"/>
        <end position="187"/>
    </location>
</feature>
<feature type="binding site" evidence="2">
    <location>
        <position position="76"/>
    </location>
    <ligand>
        <name>Zn(2+)</name>
        <dbReference type="ChEBI" id="CHEBI:29105"/>
    </ligand>
</feature>
<feature type="binding site" evidence="2">
    <location>
        <position position="79"/>
    </location>
    <ligand>
        <name>Zn(2+)</name>
        <dbReference type="ChEBI" id="CHEBI:29105"/>
    </ligand>
</feature>
<feature type="binding site" evidence="2">
    <location>
        <position position="148"/>
    </location>
    <ligand>
        <name>Zn(2+)</name>
        <dbReference type="ChEBI" id="CHEBI:29105"/>
    </ligand>
</feature>
<sequence length="187" mass="21259">MPNQEKMEKAIYQFLEALGENPDREGLKDTPKRVAKMYIEMFSGLNQDPKEQFTAVFSENHEEVVIVKDIPFYSMCEHHLVPFYGKAHIAYLPNDGRVTGLSKLARAVEVASKRPQLQERLTAQVAQALEDALAPKGIFVMIEAEHMCMTMRGIKKPGSKTITTVARGLYKDDRYERQEILSLIQKG</sequence>
<dbReference type="EC" id="3.5.4.16" evidence="2"/>
<dbReference type="EMBL" id="CP000114">
    <property type="protein sequence ID" value="ABA45773.1"/>
    <property type="molecule type" value="Genomic_DNA"/>
</dbReference>
<dbReference type="RefSeq" id="WP_001133587.1">
    <property type="nucleotide sequence ID" value="NC_007432.1"/>
</dbReference>
<dbReference type="SMR" id="Q3K0Y1"/>
<dbReference type="KEGG" id="sak:SAK_1201"/>
<dbReference type="HOGENOM" id="CLU_049768_3_3_9"/>
<dbReference type="UniPathway" id="UPA00848">
    <property type="reaction ID" value="UER00151"/>
</dbReference>
<dbReference type="GO" id="GO:0005737">
    <property type="term" value="C:cytoplasm"/>
    <property type="evidence" value="ECO:0007669"/>
    <property type="project" value="TreeGrafter"/>
</dbReference>
<dbReference type="GO" id="GO:0005525">
    <property type="term" value="F:GTP binding"/>
    <property type="evidence" value="ECO:0007669"/>
    <property type="project" value="UniProtKB-KW"/>
</dbReference>
<dbReference type="GO" id="GO:0003934">
    <property type="term" value="F:GTP cyclohydrolase I activity"/>
    <property type="evidence" value="ECO:0007669"/>
    <property type="project" value="UniProtKB-UniRule"/>
</dbReference>
<dbReference type="GO" id="GO:0008270">
    <property type="term" value="F:zinc ion binding"/>
    <property type="evidence" value="ECO:0007669"/>
    <property type="project" value="UniProtKB-UniRule"/>
</dbReference>
<dbReference type="GO" id="GO:0006730">
    <property type="term" value="P:one-carbon metabolic process"/>
    <property type="evidence" value="ECO:0007669"/>
    <property type="project" value="UniProtKB-UniRule"/>
</dbReference>
<dbReference type="GO" id="GO:0006729">
    <property type="term" value="P:tetrahydrobiopterin biosynthetic process"/>
    <property type="evidence" value="ECO:0007669"/>
    <property type="project" value="TreeGrafter"/>
</dbReference>
<dbReference type="GO" id="GO:0046654">
    <property type="term" value="P:tetrahydrofolate biosynthetic process"/>
    <property type="evidence" value="ECO:0007669"/>
    <property type="project" value="UniProtKB-UniRule"/>
</dbReference>
<dbReference type="CDD" id="cd00642">
    <property type="entry name" value="GTP_cyclohydro1"/>
    <property type="match status" value="1"/>
</dbReference>
<dbReference type="FunFam" id="1.10.286.10:FF:000001">
    <property type="entry name" value="GTP cyclohydrolase 1"/>
    <property type="match status" value="1"/>
</dbReference>
<dbReference type="FunFam" id="3.30.1130.10:FF:000001">
    <property type="entry name" value="GTP cyclohydrolase 1"/>
    <property type="match status" value="1"/>
</dbReference>
<dbReference type="Gene3D" id="1.10.286.10">
    <property type="match status" value="1"/>
</dbReference>
<dbReference type="Gene3D" id="3.30.1130.10">
    <property type="match status" value="1"/>
</dbReference>
<dbReference type="HAMAP" id="MF_00223">
    <property type="entry name" value="FolE"/>
    <property type="match status" value="1"/>
</dbReference>
<dbReference type="InterPro" id="IPR043133">
    <property type="entry name" value="GTP-CH-I_C/QueF"/>
</dbReference>
<dbReference type="InterPro" id="IPR043134">
    <property type="entry name" value="GTP-CH-I_N"/>
</dbReference>
<dbReference type="InterPro" id="IPR001474">
    <property type="entry name" value="GTP_CycHdrlase_I"/>
</dbReference>
<dbReference type="InterPro" id="IPR018234">
    <property type="entry name" value="GTP_CycHdrlase_I_CS"/>
</dbReference>
<dbReference type="InterPro" id="IPR020602">
    <property type="entry name" value="GTP_CycHdrlase_I_dom"/>
</dbReference>
<dbReference type="NCBIfam" id="TIGR00063">
    <property type="entry name" value="folE"/>
    <property type="match status" value="1"/>
</dbReference>
<dbReference type="NCBIfam" id="NF006825">
    <property type="entry name" value="PRK09347.1-2"/>
    <property type="match status" value="1"/>
</dbReference>
<dbReference type="NCBIfam" id="NF006826">
    <property type="entry name" value="PRK09347.1-3"/>
    <property type="match status" value="1"/>
</dbReference>
<dbReference type="PANTHER" id="PTHR11109:SF7">
    <property type="entry name" value="GTP CYCLOHYDROLASE 1"/>
    <property type="match status" value="1"/>
</dbReference>
<dbReference type="PANTHER" id="PTHR11109">
    <property type="entry name" value="GTP CYCLOHYDROLASE I"/>
    <property type="match status" value="1"/>
</dbReference>
<dbReference type="Pfam" id="PF01227">
    <property type="entry name" value="GTP_cyclohydroI"/>
    <property type="match status" value="1"/>
</dbReference>
<dbReference type="SUPFAM" id="SSF55620">
    <property type="entry name" value="Tetrahydrobiopterin biosynthesis enzymes-like"/>
    <property type="match status" value="1"/>
</dbReference>
<dbReference type="PROSITE" id="PS00859">
    <property type="entry name" value="GTP_CYCLOHYDROL_1_1"/>
    <property type="match status" value="1"/>
</dbReference>
<dbReference type="PROSITE" id="PS00860">
    <property type="entry name" value="GTP_CYCLOHYDROL_1_2"/>
    <property type="match status" value="1"/>
</dbReference>
<protein>
    <recommendedName>
        <fullName evidence="2">GTP cyclohydrolase 1</fullName>
        <ecNumber evidence="2">3.5.4.16</ecNumber>
    </recommendedName>
    <alternativeName>
        <fullName evidence="2">GTP cyclohydrolase I</fullName>
        <shortName evidence="2">GTP-CH-I</shortName>
    </alternativeName>
</protein>
<gene>
    <name evidence="2" type="primary">folE</name>
    <name type="ordered locus">SAK_1201</name>
</gene>
<keyword id="KW-0342">GTP-binding</keyword>
<keyword id="KW-0378">Hydrolase</keyword>
<keyword id="KW-0479">Metal-binding</keyword>
<keyword id="KW-0547">Nucleotide-binding</keyword>
<keyword id="KW-0554">One-carbon metabolism</keyword>
<keyword id="KW-0862">Zinc</keyword>
<name>GCH1_STRA1</name>
<proteinExistence type="inferred from homology"/>